<organism>
    <name type="scientific">Yersinia enterocolitica serotype O:8 / biotype 1B (strain NCTC 13174 / 8081)</name>
    <dbReference type="NCBI Taxonomy" id="393305"/>
    <lineage>
        <taxon>Bacteria</taxon>
        <taxon>Pseudomonadati</taxon>
        <taxon>Pseudomonadota</taxon>
        <taxon>Gammaproteobacteria</taxon>
        <taxon>Enterobacterales</taxon>
        <taxon>Yersiniaceae</taxon>
        <taxon>Yersinia</taxon>
    </lineage>
</organism>
<dbReference type="EC" id="2.5.1.78" evidence="1"/>
<dbReference type="EMBL" id="AM286415">
    <property type="protein sequence ID" value="CAL13194.1"/>
    <property type="molecule type" value="Genomic_DNA"/>
</dbReference>
<dbReference type="RefSeq" id="YP_001007341.1">
    <property type="nucleotide sequence ID" value="NC_008800.1"/>
</dbReference>
<dbReference type="SMR" id="A1JNS3"/>
<dbReference type="KEGG" id="yen:YE3160"/>
<dbReference type="PATRIC" id="fig|393305.7.peg.3361"/>
<dbReference type="eggNOG" id="COG0054">
    <property type="taxonomic scope" value="Bacteria"/>
</dbReference>
<dbReference type="HOGENOM" id="CLU_089358_1_1_6"/>
<dbReference type="OrthoDB" id="9809709at2"/>
<dbReference type="UniPathway" id="UPA00275">
    <property type="reaction ID" value="UER00404"/>
</dbReference>
<dbReference type="Proteomes" id="UP000000642">
    <property type="component" value="Chromosome"/>
</dbReference>
<dbReference type="GO" id="GO:0005829">
    <property type="term" value="C:cytosol"/>
    <property type="evidence" value="ECO:0007669"/>
    <property type="project" value="TreeGrafter"/>
</dbReference>
<dbReference type="GO" id="GO:0009349">
    <property type="term" value="C:riboflavin synthase complex"/>
    <property type="evidence" value="ECO:0007669"/>
    <property type="project" value="InterPro"/>
</dbReference>
<dbReference type="GO" id="GO:0000906">
    <property type="term" value="F:6,7-dimethyl-8-ribityllumazine synthase activity"/>
    <property type="evidence" value="ECO:0007669"/>
    <property type="project" value="UniProtKB-UniRule"/>
</dbReference>
<dbReference type="GO" id="GO:0009231">
    <property type="term" value="P:riboflavin biosynthetic process"/>
    <property type="evidence" value="ECO:0007669"/>
    <property type="project" value="UniProtKB-UniRule"/>
</dbReference>
<dbReference type="CDD" id="cd09209">
    <property type="entry name" value="Lumazine_synthase-I"/>
    <property type="match status" value="1"/>
</dbReference>
<dbReference type="FunFam" id="3.40.50.960:FF:000001">
    <property type="entry name" value="6,7-dimethyl-8-ribityllumazine synthase"/>
    <property type="match status" value="1"/>
</dbReference>
<dbReference type="Gene3D" id="3.40.50.960">
    <property type="entry name" value="Lumazine/riboflavin synthase"/>
    <property type="match status" value="1"/>
</dbReference>
<dbReference type="HAMAP" id="MF_00178">
    <property type="entry name" value="Lumazine_synth"/>
    <property type="match status" value="1"/>
</dbReference>
<dbReference type="InterPro" id="IPR034964">
    <property type="entry name" value="LS"/>
</dbReference>
<dbReference type="InterPro" id="IPR002180">
    <property type="entry name" value="LS/RS"/>
</dbReference>
<dbReference type="InterPro" id="IPR036467">
    <property type="entry name" value="LS/RS_sf"/>
</dbReference>
<dbReference type="NCBIfam" id="TIGR00114">
    <property type="entry name" value="lumazine-synth"/>
    <property type="match status" value="1"/>
</dbReference>
<dbReference type="NCBIfam" id="NF000812">
    <property type="entry name" value="PRK00061.1-4"/>
    <property type="match status" value="1"/>
</dbReference>
<dbReference type="PANTHER" id="PTHR21058:SF0">
    <property type="entry name" value="6,7-DIMETHYL-8-RIBITYLLUMAZINE SYNTHASE"/>
    <property type="match status" value="1"/>
</dbReference>
<dbReference type="PANTHER" id="PTHR21058">
    <property type="entry name" value="6,7-DIMETHYL-8-RIBITYLLUMAZINE SYNTHASE DMRL SYNTHASE LUMAZINE SYNTHASE"/>
    <property type="match status" value="1"/>
</dbReference>
<dbReference type="Pfam" id="PF00885">
    <property type="entry name" value="DMRL_synthase"/>
    <property type="match status" value="1"/>
</dbReference>
<dbReference type="SUPFAM" id="SSF52121">
    <property type="entry name" value="Lumazine synthase"/>
    <property type="match status" value="1"/>
</dbReference>
<reference key="1">
    <citation type="journal article" date="2006" name="PLoS Genet.">
        <title>The complete genome sequence and comparative genome analysis of the high pathogenicity Yersinia enterocolitica strain 8081.</title>
        <authorList>
            <person name="Thomson N.R."/>
            <person name="Howard S."/>
            <person name="Wren B.W."/>
            <person name="Holden M.T.G."/>
            <person name="Crossman L."/>
            <person name="Challis G.L."/>
            <person name="Churcher C."/>
            <person name="Mungall K."/>
            <person name="Brooks K."/>
            <person name="Chillingworth T."/>
            <person name="Feltwell T."/>
            <person name="Abdellah Z."/>
            <person name="Hauser H."/>
            <person name="Jagels K."/>
            <person name="Maddison M."/>
            <person name="Moule S."/>
            <person name="Sanders M."/>
            <person name="Whitehead S."/>
            <person name="Quail M.A."/>
            <person name="Dougan G."/>
            <person name="Parkhill J."/>
            <person name="Prentice M.B."/>
        </authorList>
    </citation>
    <scope>NUCLEOTIDE SEQUENCE [LARGE SCALE GENOMIC DNA]</scope>
    <source>
        <strain>NCTC 13174 / 8081</strain>
    </source>
</reference>
<feature type="chain" id="PRO_1000040551" description="6,7-dimethyl-8-ribityllumazine synthase">
    <location>
        <begin position="1"/>
        <end position="156"/>
    </location>
</feature>
<feature type="active site" description="Proton donor" evidence="1">
    <location>
        <position position="89"/>
    </location>
</feature>
<feature type="binding site" evidence="1">
    <location>
        <position position="22"/>
    </location>
    <ligand>
        <name>5-amino-6-(D-ribitylamino)uracil</name>
        <dbReference type="ChEBI" id="CHEBI:15934"/>
    </ligand>
</feature>
<feature type="binding site" evidence="1">
    <location>
        <begin position="57"/>
        <end position="59"/>
    </location>
    <ligand>
        <name>5-amino-6-(D-ribitylamino)uracil</name>
        <dbReference type="ChEBI" id="CHEBI:15934"/>
    </ligand>
</feature>
<feature type="binding site" evidence="1">
    <location>
        <begin position="81"/>
        <end position="83"/>
    </location>
    <ligand>
        <name>5-amino-6-(D-ribitylamino)uracil</name>
        <dbReference type="ChEBI" id="CHEBI:15934"/>
    </ligand>
</feature>
<feature type="binding site" evidence="1">
    <location>
        <begin position="86"/>
        <end position="87"/>
    </location>
    <ligand>
        <name>(2S)-2-hydroxy-3-oxobutyl phosphate</name>
        <dbReference type="ChEBI" id="CHEBI:58830"/>
    </ligand>
</feature>
<feature type="binding site" evidence="1">
    <location>
        <position position="114"/>
    </location>
    <ligand>
        <name>5-amino-6-(D-ribitylamino)uracil</name>
        <dbReference type="ChEBI" id="CHEBI:15934"/>
    </ligand>
</feature>
<feature type="binding site" evidence="1">
    <location>
        <position position="128"/>
    </location>
    <ligand>
        <name>(2S)-2-hydroxy-3-oxobutyl phosphate</name>
        <dbReference type="ChEBI" id="CHEBI:58830"/>
    </ligand>
</feature>
<accession>A1JNS3</accession>
<proteinExistence type="inferred from homology"/>
<protein>
    <recommendedName>
        <fullName evidence="1">6,7-dimethyl-8-ribityllumazine synthase</fullName>
        <shortName evidence="1">DMRL synthase</shortName>
        <shortName evidence="1">LS</shortName>
        <shortName evidence="1">Lumazine synthase</shortName>
        <ecNumber evidence="1">2.5.1.78</ecNumber>
    </recommendedName>
</protein>
<evidence type="ECO:0000255" key="1">
    <source>
        <dbReference type="HAMAP-Rule" id="MF_00178"/>
    </source>
</evidence>
<gene>
    <name evidence="1" type="primary">ribH</name>
    <name type="ordered locus">YE3160</name>
</gene>
<name>RISB_YERE8</name>
<keyword id="KW-0686">Riboflavin biosynthesis</keyword>
<keyword id="KW-0808">Transferase</keyword>
<sequence length="156" mass="16225">MNVIEGVVATPNARVAIAIARFNNFINDSLLEGAIDALKRIGQVTDDNITVVWVPGAYELPLVANVLAKTNRYDAVIALGTVIRGGTAHFEYVAGEASSGLSSVAMNSDIPVAFGVLTTESIEQAIERAGTKAGNKGAEAALTALEMINVIKAIKG</sequence>
<comment type="function">
    <text evidence="1">Catalyzes the formation of 6,7-dimethyl-8-ribityllumazine by condensation of 5-amino-6-(D-ribitylamino)uracil with 3,4-dihydroxy-2-butanone 4-phosphate. This is the penultimate step in the biosynthesis of riboflavin.</text>
</comment>
<comment type="catalytic activity">
    <reaction evidence="1">
        <text>(2S)-2-hydroxy-3-oxobutyl phosphate + 5-amino-6-(D-ribitylamino)uracil = 6,7-dimethyl-8-(1-D-ribityl)lumazine + phosphate + 2 H2O + H(+)</text>
        <dbReference type="Rhea" id="RHEA:26152"/>
        <dbReference type="ChEBI" id="CHEBI:15377"/>
        <dbReference type="ChEBI" id="CHEBI:15378"/>
        <dbReference type="ChEBI" id="CHEBI:15934"/>
        <dbReference type="ChEBI" id="CHEBI:43474"/>
        <dbReference type="ChEBI" id="CHEBI:58201"/>
        <dbReference type="ChEBI" id="CHEBI:58830"/>
        <dbReference type="EC" id="2.5.1.78"/>
    </reaction>
</comment>
<comment type="pathway">
    <text evidence="1">Cofactor biosynthesis; riboflavin biosynthesis; riboflavin from 2-hydroxy-3-oxobutyl phosphate and 5-amino-6-(D-ribitylamino)uracil: step 1/2.</text>
</comment>
<comment type="subunit">
    <text evidence="1">Forms an icosahedral capsid composed of 60 subunits, arranged as a dodecamer of pentamers.</text>
</comment>
<comment type="similarity">
    <text evidence="1">Belongs to the DMRL synthase family.</text>
</comment>